<keyword id="KW-0010">Activator</keyword>
<keyword id="KW-0175">Coiled coil</keyword>
<keyword id="KW-0539">Nucleus</keyword>
<keyword id="KW-1185">Reference proteome</keyword>
<keyword id="KW-0678">Repressor</keyword>
<keyword id="KW-0804">Transcription</keyword>
<keyword id="KW-0805">Transcription regulation</keyword>
<sequence length="1085" mass="117377">MDNTDEPQKKVFKARKTMRASDRQQLEAVYKAKEDLLKTTEVKLLNGKHENGDSDLNSPLSNTDCTEDKREVNGLVDSNEISEIKRPESRAESVVSDLEPKPLSPVNVTREQDTDVALVCEAENRVLGSNKVNFHEENNIKNRLDQRESDTPSGENKSNCDNSFSPEEKGKTNDITIISNSPVEEKKKAGEIIVEDTVGEEAISSSMETDQEPKNERDGTAGLSETVVEKAVDESSESILENTDSMEADEIIPILEKLAPAEDEMSCFSKSALLPVDDTAPDLEEKMDNCLSSPLKQESNESLPKEAFLVLSDEEDPCDEREHAEVILPNKSGLPEEVEKSEEEDKEREVVHKEEEKHTERGEVSRRKRSKSEDMDSVHSKRRRFVGEEDYEAEFQVKITARRDVDQKLEKVIQRVLEEKLAALQCAVFDKTLADLKMRIEKVECNKRHKTVLTELQAKITRLTKRFGAAKEDMKKKQENTPNPSLSSGKAASSTANANNLTYRNITTVRQMLESKRNVGDSKPATLQAPVSAAPASSLAAPQTPASGHPKPQTPVTSSPLTTTVISTANTATVVGTSQVPSGSTQPMSVSLQSLPVILHVPVAVSSQPQLLQGHAGTLVTNQQSGSVEFISVQSSSTVGSLTKTAVSLASTNTTKPNNSPSVSSPGVQRNSPASAGSVRTTLAVQAVSTTHPVAQTTRTSLPTVGTSGLHNSTSSRGPIHMKIPLSAFNSTAPTEPPTITAPRVENQTSRPPTDSSANKRTAEGPTQSVKVTGSDSGGVIDLTLDDEDDVSSQAEAKKQNQTASTAQSIPTQPLSRPLPPLQPNPLQQTGVPTSGPSQTTIHVLPTAPTTVNVTHRPVTQTAAKLPIPRTPTNHQVVYTTIPAPPAQNSVRGAVMPSPSLRPVNPQTGSMTVRMPQTTAYVVNNGLTLGSGAPQLTVHHRPPQVHAEPPRPVHPAPLPEAPQPPRLPPEAANTSLPQKPQLKLARVQSQNGIVLSWSVIEVDRSCASVDSYHLYAYHEDPSATMPSQWKKIGEVKALPLPMACTLTQFVSGSKYYFAVRAKDIYGRFGPFCDPQSTDVISSQSS</sequence>
<feature type="chain" id="PRO_0000281782" description="Activating transcription factor 7-interacting protein 1">
    <location>
        <begin position="1"/>
        <end position="1085"/>
    </location>
</feature>
<feature type="domain" description="Fibronectin type-III" evidence="3">
    <location>
        <begin position="976"/>
        <end position="1082"/>
    </location>
</feature>
<feature type="region of interest" description="Disordered" evidence="4">
    <location>
        <begin position="1"/>
        <end position="22"/>
    </location>
</feature>
<feature type="region of interest" description="Disordered" evidence="4">
    <location>
        <begin position="47"/>
        <end position="109"/>
    </location>
</feature>
<feature type="region of interest" description="Disordered" evidence="4">
    <location>
        <begin position="127"/>
        <end position="245"/>
    </location>
</feature>
<feature type="region of interest" description="Disordered" evidence="4">
    <location>
        <begin position="329"/>
        <end position="381"/>
    </location>
</feature>
<feature type="region of interest" description="Disordered" evidence="4">
    <location>
        <begin position="469"/>
        <end position="499"/>
    </location>
</feature>
<feature type="region of interest" description="Disordered" evidence="4">
    <location>
        <begin position="517"/>
        <end position="560"/>
    </location>
</feature>
<feature type="region of interest" description="Disordered" evidence="4">
    <location>
        <begin position="650"/>
        <end position="843"/>
    </location>
</feature>
<feature type="region of interest" description="Disordered" evidence="4">
    <location>
        <begin position="889"/>
        <end position="910"/>
    </location>
</feature>
<feature type="region of interest" description="Disordered" evidence="4">
    <location>
        <begin position="932"/>
        <end position="975"/>
    </location>
</feature>
<feature type="coiled-coil region" evidence="2">
    <location>
        <begin position="446"/>
        <end position="480"/>
    </location>
</feature>
<feature type="compositionally biased region" description="Polar residues" evidence="4">
    <location>
        <begin position="54"/>
        <end position="64"/>
    </location>
</feature>
<feature type="compositionally biased region" description="Basic and acidic residues" evidence="4">
    <location>
        <begin position="82"/>
        <end position="91"/>
    </location>
</feature>
<feature type="compositionally biased region" description="Basic and acidic residues" evidence="4">
    <location>
        <begin position="133"/>
        <end position="150"/>
    </location>
</feature>
<feature type="compositionally biased region" description="Polar residues" evidence="4">
    <location>
        <begin position="151"/>
        <end position="165"/>
    </location>
</feature>
<feature type="compositionally biased region" description="Polar residues" evidence="4">
    <location>
        <begin position="173"/>
        <end position="182"/>
    </location>
</feature>
<feature type="compositionally biased region" description="Basic and acidic residues" evidence="4">
    <location>
        <begin position="347"/>
        <end position="379"/>
    </location>
</feature>
<feature type="compositionally biased region" description="Basic and acidic residues" evidence="4">
    <location>
        <begin position="469"/>
        <end position="479"/>
    </location>
</feature>
<feature type="compositionally biased region" description="Low complexity" evidence="4">
    <location>
        <begin position="487"/>
        <end position="499"/>
    </location>
</feature>
<feature type="compositionally biased region" description="Low complexity" evidence="4">
    <location>
        <begin position="529"/>
        <end position="547"/>
    </location>
</feature>
<feature type="compositionally biased region" description="Low complexity" evidence="4">
    <location>
        <begin position="651"/>
        <end position="666"/>
    </location>
</feature>
<feature type="compositionally biased region" description="Polar residues" evidence="4">
    <location>
        <begin position="667"/>
        <end position="717"/>
    </location>
</feature>
<feature type="compositionally biased region" description="Low complexity" evidence="4">
    <location>
        <begin position="732"/>
        <end position="743"/>
    </location>
</feature>
<feature type="compositionally biased region" description="Polar residues" evidence="4">
    <location>
        <begin position="746"/>
        <end position="775"/>
    </location>
</feature>
<feature type="compositionally biased region" description="Polar residues" evidence="4">
    <location>
        <begin position="792"/>
        <end position="810"/>
    </location>
</feature>
<feature type="compositionally biased region" description="Polar residues" evidence="4">
    <location>
        <begin position="830"/>
        <end position="843"/>
    </location>
</feature>
<feature type="compositionally biased region" description="Pro residues" evidence="4">
    <location>
        <begin position="950"/>
        <end position="968"/>
    </location>
</feature>
<evidence type="ECO:0000250" key="1"/>
<evidence type="ECO:0000255" key="2"/>
<evidence type="ECO:0000255" key="3">
    <source>
        <dbReference type="PROSITE-ProRule" id="PRU00316"/>
    </source>
</evidence>
<evidence type="ECO:0000256" key="4">
    <source>
        <dbReference type="SAM" id="MobiDB-lite"/>
    </source>
</evidence>
<evidence type="ECO:0000305" key="5"/>
<comment type="function">
    <text evidence="1">Recruiter that couples transcriptional factors to general transcription apparatus and thereby modulates transcription regulation and chromatin formation. Can both act as an activator or a repressor depending on the context. Mediates MBD1-dependent transcriptional repression, probably by recruiting complexes containing histone methyltransferase activity. May belong to a complex that represses transcription and couples DNA methylation and histone H3 'Lys-9' trimethylation (H3K9me3) (By similarity).</text>
</comment>
<comment type="subcellular location">
    <subcellularLocation>
        <location evidence="1">Nucleus</location>
    </subcellularLocation>
</comment>
<comment type="similarity">
    <text evidence="5">Belongs to the MCAF family.</text>
</comment>
<gene>
    <name type="primary">ATF7IP</name>
    <name type="synonym">MCAF1</name>
    <name type="ORF">RCJMB04_27g4</name>
</gene>
<organism>
    <name type="scientific">Gallus gallus</name>
    <name type="common">Chicken</name>
    <dbReference type="NCBI Taxonomy" id="9031"/>
    <lineage>
        <taxon>Eukaryota</taxon>
        <taxon>Metazoa</taxon>
        <taxon>Chordata</taxon>
        <taxon>Craniata</taxon>
        <taxon>Vertebrata</taxon>
        <taxon>Euteleostomi</taxon>
        <taxon>Archelosauria</taxon>
        <taxon>Archosauria</taxon>
        <taxon>Dinosauria</taxon>
        <taxon>Saurischia</taxon>
        <taxon>Theropoda</taxon>
        <taxon>Coelurosauria</taxon>
        <taxon>Aves</taxon>
        <taxon>Neognathae</taxon>
        <taxon>Galloanserae</taxon>
        <taxon>Galliformes</taxon>
        <taxon>Phasianidae</taxon>
        <taxon>Phasianinae</taxon>
        <taxon>Gallus</taxon>
    </lineage>
</organism>
<proteinExistence type="evidence at transcript level"/>
<reference key="1">
    <citation type="journal article" date="2005" name="Genome Biol.">
        <title>Full-length cDNAs from chicken bursal lymphocytes to facilitate gene function analysis.</title>
        <authorList>
            <person name="Caldwell R.B."/>
            <person name="Kierzek A.M."/>
            <person name="Arakawa H."/>
            <person name="Bezzubov Y."/>
            <person name="Zaim J."/>
            <person name="Fiedler P."/>
            <person name="Kutter S."/>
            <person name="Blagodatski A."/>
            <person name="Kostovska D."/>
            <person name="Koter M."/>
            <person name="Plachy J."/>
            <person name="Carninci P."/>
            <person name="Hayashizaki Y."/>
            <person name="Buerstedde J.-M."/>
        </authorList>
    </citation>
    <scope>NUCLEOTIDE SEQUENCE [LARGE SCALE MRNA]</scope>
    <source>
        <strain>CB</strain>
        <tissue>Bursa of Fabricius</tissue>
    </source>
</reference>
<accession>Q5ZIE8</accession>
<dbReference type="EMBL" id="AJ720836">
    <property type="protein sequence ID" value="CAG32495.1"/>
    <property type="molecule type" value="mRNA"/>
</dbReference>
<dbReference type="RefSeq" id="NP_001012831.1">
    <property type="nucleotide sequence ID" value="NM_001012813.2"/>
</dbReference>
<dbReference type="RefSeq" id="NP_001384014.1">
    <property type="nucleotide sequence ID" value="NM_001397085.1"/>
</dbReference>
<dbReference type="RefSeq" id="XP_040552269.2">
    <property type="nucleotide sequence ID" value="XM_040696335.2"/>
</dbReference>
<dbReference type="RefSeq" id="XP_040552290.1">
    <property type="nucleotide sequence ID" value="XM_040696356.2"/>
</dbReference>
<dbReference type="SMR" id="Q5ZIE8"/>
<dbReference type="FunCoup" id="Q5ZIE8">
    <property type="interactions" value="1610"/>
</dbReference>
<dbReference type="STRING" id="9031.ENSGALP00000019263"/>
<dbReference type="GlyGen" id="Q5ZIE8">
    <property type="glycosylation" value="1 site"/>
</dbReference>
<dbReference type="PaxDb" id="9031-ENSGALP00000041710"/>
<dbReference type="Ensembl" id="ENSGALT00010026653.1">
    <property type="protein sequence ID" value="ENSGALP00010015204.1"/>
    <property type="gene ID" value="ENSGALG00010011144.1"/>
</dbReference>
<dbReference type="GeneID" id="417966"/>
<dbReference type="KEGG" id="gga:417966"/>
<dbReference type="CTD" id="55729"/>
<dbReference type="VEuPathDB" id="HostDB:geneid_417966"/>
<dbReference type="eggNOG" id="ENOG502QSM2">
    <property type="taxonomic scope" value="Eukaryota"/>
</dbReference>
<dbReference type="GeneTree" id="ENSGT00530000063707"/>
<dbReference type="InParanoid" id="Q5ZIE8"/>
<dbReference type="OMA" id="YQETIHE"/>
<dbReference type="OrthoDB" id="2434995at2759"/>
<dbReference type="PhylomeDB" id="Q5ZIE8"/>
<dbReference type="PRO" id="PR:Q5ZIE8"/>
<dbReference type="Proteomes" id="UP000000539">
    <property type="component" value="Chromosome 1"/>
</dbReference>
<dbReference type="GO" id="GO:0005634">
    <property type="term" value="C:nucleus"/>
    <property type="evidence" value="ECO:0000250"/>
    <property type="project" value="UniProtKB"/>
</dbReference>
<dbReference type="GO" id="GO:0005667">
    <property type="term" value="C:transcription regulator complex"/>
    <property type="evidence" value="ECO:0000318"/>
    <property type="project" value="GO_Central"/>
</dbReference>
<dbReference type="GO" id="GO:0003712">
    <property type="term" value="F:transcription coregulator activity"/>
    <property type="evidence" value="ECO:0000318"/>
    <property type="project" value="GO_Central"/>
</dbReference>
<dbReference type="GO" id="GO:0006346">
    <property type="term" value="P:DNA methylation-dependent constitutive heterochromatin formation"/>
    <property type="evidence" value="ECO:0000250"/>
    <property type="project" value="UniProtKB"/>
</dbReference>
<dbReference type="GO" id="GO:0006355">
    <property type="term" value="P:regulation of DNA-templated transcription"/>
    <property type="evidence" value="ECO:0000318"/>
    <property type="project" value="GO_Central"/>
</dbReference>
<dbReference type="Gene3D" id="2.60.40.10">
    <property type="entry name" value="Immunoglobulins"/>
    <property type="match status" value="1"/>
</dbReference>
<dbReference type="InterPro" id="IPR026085">
    <property type="entry name" value="ATF7-int"/>
</dbReference>
<dbReference type="InterPro" id="IPR031870">
    <property type="entry name" value="ATF7IP_BD"/>
</dbReference>
<dbReference type="InterPro" id="IPR056565">
    <property type="entry name" value="Fn3_ATF7IP"/>
</dbReference>
<dbReference type="InterPro" id="IPR003961">
    <property type="entry name" value="FN3_dom"/>
</dbReference>
<dbReference type="InterPro" id="IPR036116">
    <property type="entry name" value="FN3_sf"/>
</dbReference>
<dbReference type="InterPro" id="IPR013783">
    <property type="entry name" value="Ig-like_fold"/>
</dbReference>
<dbReference type="PANTHER" id="PTHR23210">
    <property type="entry name" value="ACTIVATING TRANSCRIPTION FACTOR 7 INTERACTING PROTEIN"/>
    <property type="match status" value="1"/>
</dbReference>
<dbReference type="PANTHER" id="PTHR23210:SF26">
    <property type="entry name" value="ACTIVATING TRANSCRIPTION FACTOR 7-INTERACTING PROTEIN 1"/>
    <property type="match status" value="1"/>
</dbReference>
<dbReference type="Pfam" id="PF16788">
    <property type="entry name" value="ATF7IP_BD"/>
    <property type="match status" value="1"/>
</dbReference>
<dbReference type="Pfam" id="PF16794">
    <property type="entry name" value="fn3_4"/>
    <property type="match status" value="1"/>
</dbReference>
<dbReference type="SUPFAM" id="SSF49265">
    <property type="entry name" value="Fibronectin type III"/>
    <property type="match status" value="1"/>
</dbReference>
<dbReference type="PROSITE" id="PS50853">
    <property type="entry name" value="FN3"/>
    <property type="match status" value="1"/>
</dbReference>
<protein>
    <recommendedName>
        <fullName>Activating transcription factor 7-interacting protein 1</fullName>
    </recommendedName>
    <alternativeName>
        <fullName>MBD1-containing chromatin-associated factor 1</fullName>
    </alternativeName>
</protein>
<name>MCAF1_CHICK</name>